<dbReference type="EMBL" id="CH379062">
    <property type="protein sequence ID" value="EAL32874.1"/>
    <property type="molecule type" value="Genomic_DNA"/>
</dbReference>
<dbReference type="RefSeq" id="XP_001355815.1">
    <property type="nucleotide sequence ID" value="XM_001355779.3"/>
</dbReference>
<dbReference type="SMR" id="Q29JT7"/>
<dbReference type="FunCoup" id="Q29JT7">
    <property type="interactions" value="1581"/>
</dbReference>
<dbReference type="STRING" id="46245.Q29JT7"/>
<dbReference type="EnsemblMetazoa" id="FBtr0368600">
    <property type="protein sequence ID" value="FBpp0331333"/>
    <property type="gene ID" value="FBgn0081663"/>
</dbReference>
<dbReference type="GeneID" id="4816170"/>
<dbReference type="KEGG" id="dpo:4816170"/>
<dbReference type="CTD" id="34196"/>
<dbReference type="eggNOG" id="KOG4038">
    <property type="taxonomic scope" value="Eukaryota"/>
</dbReference>
<dbReference type="HOGENOM" id="CLU_119682_0_0_1"/>
<dbReference type="InParanoid" id="Q29JT7"/>
<dbReference type="OMA" id="STNTWQN"/>
<dbReference type="PhylomeDB" id="Q29JT7"/>
<dbReference type="Proteomes" id="UP000001819">
    <property type="component" value="Chromosome 4"/>
</dbReference>
<dbReference type="Bgee" id="FBgn0081663">
    <property type="expression patterns" value="Expressed in male reproductive system and 2 other cell types or tissues"/>
</dbReference>
<dbReference type="GO" id="GO:0005737">
    <property type="term" value="C:cytoplasm"/>
    <property type="evidence" value="ECO:0000250"/>
    <property type="project" value="UniProtKB"/>
</dbReference>
<dbReference type="GO" id="GO:0005634">
    <property type="term" value="C:nucleus"/>
    <property type="evidence" value="ECO:0000250"/>
    <property type="project" value="UniProtKB"/>
</dbReference>
<dbReference type="GO" id="GO:0050953">
    <property type="term" value="P:sensory perception of light stimulus"/>
    <property type="evidence" value="ECO:0007669"/>
    <property type="project" value="InterPro"/>
</dbReference>
<dbReference type="FunFam" id="2.70.50.40:FF:000002">
    <property type="entry name" value="Retinal rod rhodopsin-sensitive cGMP 3',5'-cyclic phosphodiesterase subunit delta"/>
    <property type="match status" value="1"/>
</dbReference>
<dbReference type="Gene3D" id="2.70.50.40">
    <property type="entry name" value="GMP phosphodiesterase, delta subunit"/>
    <property type="match status" value="1"/>
</dbReference>
<dbReference type="InterPro" id="IPR014756">
    <property type="entry name" value="Ig_E-set"/>
</dbReference>
<dbReference type="InterPro" id="IPR008015">
    <property type="entry name" value="PDED_dom"/>
</dbReference>
<dbReference type="InterPro" id="IPR037036">
    <property type="entry name" value="PDED_dom_sf"/>
</dbReference>
<dbReference type="InterPro" id="IPR017287">
    <property type="entry name" value="Rhodop-sen_GMP-Pdiesterase_dsu"/>
</dbReference>
<dbReference type="PANTHER" id="PTHR12976">
    <property type="entry name" value="RETINAL ROD RHODOPSIN-SENSITIVE CGMP 3',5'-CYCLIC PHOSPHODIESTERASE DELTA-SUBUNIT"/>
    <property type="match status" value="1"/>
</dbReference>
<dbReference type="PANTHER" id="PTHR12976:SF0">
    <property type="entry name" value="RETINAL ROD RHODOPSIN-SENSITIVE CGMP 3',5'-CYCLIC PHOSPHODIESTERASE SUBUNIT DELTA"/>
    <property type="match status" value="1"/>
</dbReference>
<dbReference type="Pfam" id="PF05351">
    <property type="entry name" value="GMP_PDE_delta"/>
    <property type="match status" value="1"/>
</dbReference>
<dbReference type="PIRSF" id="PIRSF037825">
    <property type="entry name" value="GMP-Pdiesterase_delta"/>
    <property type="match status" value="1"/>
</dbReference>
<dbReference type="SUPFAM" id="SSF81296">
    <property type="entry name" value="E set domains"/>
    <property type="match status" value="1"/>
</dbReference>
<accession>Q29JT7</accession>
<feature type="chain" id="PRO_0000363678" description="Probable cGMP 3',5'-cyclic phosphodiesterase subunit delta">
    <location>
        <begin position="1"/>
        <end position="151"/>
    </location>
</feature>
<sequence>MGSDDQSAADKIQKGFQINYMILRDADSGKIIWQENKDFSAPDVEHEARVPVKILDMRAVSREINFSTVESMENFRLDQKVLFKGRIMEEWFFEMGFVGASTTNTWQSTIEAAPESQMMPAKVLNGNVTIQTSFYDNETLITKSVVRLYYI</sequence>
<organism>
    <name type="scientific">Drosophila pseudoobscura pseudoobscura</name>
    <name type="common">Fruit fly</name>
    <dbReference type="NCBI Taxonomy" id="46245"/>
    <lineage>
        <taxon>Eukaryota</taxon>
        <taxon>Metazoa</taxon>
        <taxon>Ecdysozoa</taxon>
        <taxon>Arthropoda</taxon>
        <taxon>Hexapoda</taxon>
        <taxon>Insecta</taxon>
        <taxon>Pterygota</taxon>
        <taxon>Neoptera</taxon>
        <taxon>Endopterygota</taxon>
        <taxon>Diptera</taxon>
        <taxon>Brachycera</taxon>
        <taxon>Muscomorpha</taxon>
        <taxon>Ephydroidea</taxon>
        <taxon>Drosophilidae</taxon>
        <taxon>Drosophila</taxon>
        <taxon>Sophophora</taxon>
    </lineage>
</organism>
<evidence type="ECO:0000250" key="1">
    <source>
        <dbReference type="UniProtKB" id="Q9VLJ0"/>
    </source>
</evidence>
<evidence type="ECO:0000255" key="2"/>
<evidence type="ECO:0000312" key="3">
    <source>
        <dbReference type="EMBL" id="EAL32874.1"/>
    </source>
</evidence>
<reference evidence="3" key="1">
    <citation type="journal article" date="2005" name="Genome Res.">
        <title>Comparative genome sequencing of Drosophila pseudoobscura: chromosomal, gene, and cis-element evolution.</title>
        <authorList>
            <person name="Richards S."/>
            <person name="Liu Y."/>
            <person name="Bettencourt B.R."/>
            <person name="Hradecky P."/>
            <person name="Letovsky S."/>
            <person name="Nielsen R."/>
            <person name="Thornton K."/>
            <person name="Hubisz M.J."/>
            <person name="Chen R."/>
            <person name="Meisel R.P."/>
            <person name="Couronne O."/>
            <person name="Hua S."/>
            <person name="Smith M.A."/>
            <person name="Zhang P."/>
            <person name="Liu J."/>
            <person name="Bussemaker H.J."/>
            <person name="van Batenburg M.F."/>
            <person name="Howells S.L."/>
            <person name="Scherer S.E."/>
            <person name="Sodergren E."/>
            <person name="Matthews B.B."/>
            <person name="Crosby M.A."/>
            <person name="Schroeder A.J."/>
            <person name="Ortiz-Barrientos D."/>
            <person name="Rives C.M."/>
            <person name="Metzker M.L."/>
            <person name="Muzny D.M."/>
            <person name="Scott G."/>
            <person name="Steffen D."/>
            <person name="Wheeler D.A."/>
            <person name="Worley K.C."/>
            <person name="Havlak P."/>
            <person name="Durbin K.J."/>
            <person name="Egan A."/>
            <person name="Gill R."/>
            <person name="Hume J."/>
            <person name="Morgan M.B."/>
            <person name="Miner G."/>
            <person name="Hamilton C."/>
            <person name="Huang Y."/>
            <person name="Waldron L."/>
            <person name="Verduzco D."/>
            <person name="Clerc-Blankenburg K.P."/>
            <person name="Dubchak I."/>
            <person name="Noor M.A.F."/>
            <person name="Anderson W."/>
            <person name="White K.P."/>
            <person name="Clark A.G."/>
            <person name="Schaeffer S.W."/>
            <person name="Gelbart W.M."/>
            <person name="Weinstock G.M."/>
            <person name="Gibbs R.A."/>
        </authorList>
    </citation>
    <scope>NUCLEOTIDE SEQUENCE [LARGE SCALE GENOMIC DNA]</scope>
    <source>
        <strain>MV2-25 / Tucson 14011-0121.94</strain>
    </source>
</reference>
<keyword id="KW-0140">cGMP</keyword>
<keyword id="KW-0963">Cytoplasm</keyword>
<keyword id="KW-0539">Nucleus</keyword>
<keyword id="KW-1185">Reference proteome</keyword>
<protein>
    <recommendedName>
        <fullName>Probable cGMP 3',5'-cyclic phosphodiesterase subunit delta</fullName>
    </recommendedName>
</protein>
<name>PDE6D_DROPS</name>
<comment type="subunit">
    <text evidence="1">Interacts with Pde6.</text>
</comment>
<comment type="subcellular location">
    <subcellularLocation>
        <location evidence="1">Nucleus</location>
    </subcellularLocation>
    <subcellularLocation>
        <location evidence="1">Cytoplasm</location>
    </subcellularLocation>
</comment>
<comment type="similarity">
    <text evidence="2">Belongs to the PDE6D/unc-119 family.</text>
</comment>
<gene>
    <name evidence="1" type="primary">PrBP</name>
    <name type="ORF">GA21678</name>
</gene>
<proteinExistence type="inferred from homology"/>